<reference key="1">
    <citation type="journal article" date="2006" name="Proc. Natl. Acad. Sci. U.S.A.">
        <title>Molecular genetic anatomy of inter- and intraserotype variation in the human bacterial pathogen group A Streptococcus.</title>
        <authorList>
            <person name="Beres S.B."/>
            <person name="Richter E.W."/>
            <person name="Nagiec M.J."/>
            <person name="Sumby P."/>
            <person name="Porcella S.F."/>
            <person name="DeLeo F.R."/>
            <person name="Musser J.M."/>
        </authorList>
    </citation>
    <scope>NUCLEOTIDE SEQUENCE [LARGE SCALE GENOMIC DNA]</scope>
    <source>
        <strain>MGAS10750</strain>
    </source>
</reference>
<comment type="function">
    <text evidence="1">Catalyzes the reversible formation of acyl-phosphate (acyl-PO(4)) from acyl-[acyl-carrier-protein] (acyl-ACP). This enzyme utilizes acyl-ACP as fatty acyl donor, but not acyl-CoA.</text>
</comment>
<comment type="catalytic activity">
    <reaction evidence="1">
        <text>a fatty acyl-[ACP] + phosphate = an acyl phosphate + holo-[ACP]</text>
        <dbReference type="Rhea" id="RHEA:42292"/>
        <dbReference type="Rhea" id="RHEA-COMP:9685"/>
        <dbReference type="Rhea" id="RHEA-COMP:14125"/>
        <dbReference type="ChEBI" id="CHEBI:43474"/>
        <dbReference type="ChEBI" id="CHEBI:59918"/>
        <dbReference type="ChEBI" id="CHEBI:64479"/>
        <dbReference type="ChEBI" id="CHEBI:138651"/>
        <dbReference type="EC" id="2.3.1.274"/>
    </reaction>
</comment>
<comment type="pathway">
    <text evidence="1">Lipid metabolism; phospholipid metabolism.</text>
</comment>
<comment type="subunit">
    <text evidence="1">Homodimer. Probably interacts with PlsY.</text>
</comment>
<comment type="subcellular location">
    <subcellularLocation>
        <location evidence="1">Cytoplasm</location>
    </subcellularLocation>
    <text evidence="1">Associated with the membrane possibly through PlsY.</text>
</comment>
<comment type="similarity">
    <text evidence="1">Belongs to the PlsX family.</text>
</comment>
<comment type="sequence caution" evidence="2">
    <conflict type="erroneous initiation">
        <sequence resource="EMBL-CDS" id="ABF36970"/>
    </conflict>
</comment>
<evidence type="ECO:0000255" key="1">
    <source>
        <dbReference type="HAMAP-Rule" id="MF_00019"/>
    </source>
</evidence>
<evidence type="ECO:0000305" key="2"/>
<dbReference type="EC" id="2.3.1.274" evidence="1"/>
<dbReference type="EMBL" id="CP000262">
    <property type="protein sequence ID" value="ABF36970.1"/>
    <property type="status" value="ALT_INIT"/>
    <property type="molecule type" value="Genomic_DNA"/>
</dbReference>
<dbReference type="SMR" id="Q1J941"/>
<dbReference type="KEGG" id="spi:MGAS10750_Spy0020"/>
<dbReference type="HOGENOM" id="CLU_039379_1_1_9"/>
<dbReference type="UniPathway" id="UPA00085"/>
<dbReference type="Proteomes" id="UP000002434">
    <property type="component" value="Chromosome"/>
</dbReference>
<dbReference type="GO" id="GO:0005737">
    <property type="term" value="C:cytoplasm"/>
    <property type="evidence" value="ECO:0007669"/>
    <property type="project" value="UniProtKB-SubCell"/>
</dbReference>
<dbReference type="GO" id="GO:0043811">
    <property type="term" value="F:phosphate:acyl-[acyl carrier protein] acyltransferase activity"/>
    <property type="evidence" value="ECO:0007669"/>
    <property type="project" value="UniProtKB-UniRule"/>
</dbReference>
<dbReference type="GO" id="GO:0006633">
    <property type="term" value="P:fatty acid biosynthetic process"/>
    <property type="evidence" value="ECO:0007669"/>
    <property type="project" value="UniProtKB-UniRule"/>
</dbReference>
<dbReference type="GO" id="GO:0008654">
    <property type="term" value="P:phospholipid biosynthetic process"/>
    <property type="evidence" value="ECO:0007669"/>
    <property type="project" value="UniProtKB-KW"/>
</dbReference>
<dbReference type="Gene3D" id="3.40.718.10">
    <property type="entry name" value="Isopropylmalate Dehydrogenase"/>
    <property type="match status" value="1"/>
</dbReference>
<dbReference type="HAMAP" id="MF_00019">
    <property type="entry name" value="PlsX"/>
    <property type="match status" value="1"/>
</dbReference>
<dbReference type="InterPro" id="IPR003664">
    <property type="entry name" value="FA_synthesis"/>
</dbReference>
<dbReference type="InterPro" id="IPR012281">
    <property type="entry name" value="Phospholipid_synth_PlsX-like"/>
</dbReference>
<dbReference type="NCBIfam" id="TIGR00182">
    <property type="entry name" value="plsX"/>
    <property type="match status" value="1"/>
</dbReference>
<dbReference type="PANTHER" id="PTHR30100">
    <property type="entry name" value="FATTY ACID/PHOSPHOLIPID SYNTHESIS PROTEIN PLSX"/>
    <property type="match status" value="1"/>
</dbReference>
<dbReference type="PANTHER" id="PTHR30100:SF1">
    <property type="entry name" value="PHOSPHATE ACYLTRANSFERASE"/>
    <property type="match status" value="1"/>
</dbReference>
<dbReference type="Pfam" id="PF02504">
    <property type="entry name" value="FA_synthesis"/>
    <property type="match status" value="1"/>
</dbReference>
<dbReference type="PIRSF" id="PIRSF002465">
    <property type="entry name" value="Phsphlp_syn_PlsX"/>
    <property type="match status" value="1"/>
</dbReference>
<dbReference type="SUPFAM" id="SSF53659">
    <property type="entry name" value="Isocitrate/Isopropylmalate dehydrogenase-like"/>
    <property type="match status" value="1"/>
</dbReference>
<protein>
    <recommendedName>
        <fullName evidence="1">Phosphate acyltransferase</fullName>
        <ecNumber evidence="1">2.3.1.274</ecNumber>
    </recommendedName>
    <alternativeName>
        <fullName evidence="1">Acyl-ACP phosphotransacylase</fullName>
    </alternativeName>
    <alternativeName>
        <fullName evidence="1">Acyl-[acyl-carrier-protein]--phosphate acyltransferase</fullName>
    </alternativeName>
    <alternativeName>
        <fullName evidence="1">Phosphate-acyl-ACP acyltransferase</fullName>
    </alternativeName>
</protein>
<keyword id="KW-0963">Cytoplasm</keyword>
<keyword id="KW-0444">Lipid biosynthesis</keyword>
<keyword id="KW-0443">Lipid metabolism</keyword>
<keyword id="KW-0594">Phospholipid biosynthesis</keyword>
<keyword id="KW-1208">Phospholipid metabolism</keyword>
<keyword id="KW-0808">Transferase</keyword>
<sequence>MKRIAIDAMGGDNAPKAIVEGVNQAIEAFSDIEIQLYGDQTKINSYLIQSDRVAIIHTDEKIMSDDEPAKAVRRKKKASMVLAAKAVKEGKADAIISAGNTGALLAVGLFVVGRIKGVDRPGLLSTIPTVTGLGFDMLDLGANAENTAKHLHQYAILGSFYAKNVRGIANPRVGLLNNGTEETKGDPLRKATYELLTADNTISFVGNVEARELMSGVADVIVSDGFTGNAVLKSIEGTAISIMGQLKQIINSGGIKTKIGASLLKSSLYEMKKTLDYSSAGGAVLFGLKAPVVKSHGSSDVKAIFSTIKQVRTMLDTNVVGQLVEEFAKETQVND</sequence>
<name>PLSX_STRPF</name>
<accession>Q1J941</accession>
<gene>
    <name evidence="1" type="primary">plsX</name>
    <name type="ordered locus">MGAS10750_Spy0020</name>
</gene>
<proteinExistence type="inferred from homology"/>
<organism>
    <name type="scientific">Streptococcus pyogenes serotype M4 (strain MGAS10750)</name>
    <dbReference type="NCBI Taxonomy" id="370554"/>
    <lineage>
        <taxon>Bacteria</taxon>
        <taxon>Bacillati</taxon>
        <taxon>Bacillota</taxon>
        <taxon>Bacilli</taxon>
        <taxon>Lactobacillales</taxon>
        <taxon>Streptococcaceae</taxon>
        <taxon>Streptococcus</taxon>
    </lineage>
</organism>
<feature type="chain" id="PRO_0000329272" description="Phosphate acyltransferase">
    <location>
        <begin position="1"/>
        <end position="335"/>
    </location>
</feature>